<reference key="1">
    <citation type="journal article" date="2011" name="BMC Genomics">
        <title>Complete genome sequence of the filamentous anoxygenic phototrophic bacterium Chloroflexus aurantiacus.</title>
        <authorList>
            <person name="Tang K.H."/>
            <person name="Barry K."/>
            <person name="Chertkov O."/>
            <person name="Dalin E."/>
            <person name="Han C.S."/>
            <person name="Hauser L.J."/>
            <person name="Honchak B.M."/>
            <person name="Karbach L.E."/>
            <person name="Land M.L."/>
            <person name="Lapidus A."/>
            <person name="Larimer F.W."/>
            <person name="Mikhailova N."/>
            <person name="Pitluck S."/>
            <person name="Pierson B.K."/>
            <person name="Blankenship R.E."/>
        </authorList>
    </citation>
    <scope>NUCLEOTIDE SEQUENCE [LARGE SCALE GENOMIC DNA]</scope>
    <source>
        <strain>ATCC 29366 / DSM 635 / J-10-fl</strain>
    </source>
</reference>
<gene>
    <name evidence="2" type="primary">tuf1</name>
    <name type="ordered locus">Caur_2182</name>
</gene>
<gene>
    <name evidence="2" type="primary">tuf2</name>
    <name type="ordered locus">Caur_2367</name>
</gene>
<organism>
    <name type="scientific">Chloroflexus aurantiacus (strain ATCC 29366 / DSM 635 / J-10-fl)</name>
    <dbReference type="NCBI Taxonomy" id="324602"/>
    <lineage>
        <taxon>Bacteria</taxon>
        <taxon>Bacillati</taxon>
        <taxon>Chloroflexota</taxon>
        <taxon>Chloroflexia</taxon>
        <taxon>Chloroflexales</taxon>
        <taxon>Chloroflexineae</taxon>
        <taxon>Chloroflexaceae</taxon>
        <taxon>Chloroflexus</taxon>
    </lineage>
</organism>
<accession>A9WFP3</accession>
<protein>
    <recommendedName>
        <fullName evidence="2">Elongation factor Tu</fullName>
        <shortName evidence="2">EF-Tu</shortName>
        <ecNumber evidence="2">3.6.5.3</ecNumber>
    </recommendedName>
</protein>
<comment type="function">
    <text evidence="2">GTP hydrolase that promotes the GTP-dependent binding of aminoacyl-tRNA to the A-site of ribosomes during protein biosynthesis.</text>
</comment>
<comment type="catalytic activity">
    <reaction evidence="2">
        <text>GTP + H2O = GDP + phosphate + H(+)</text>
        <dbReference type="Rhea" id="RHEA:19669"/>
        <dbReference type="ChEBI" id="CHEBI:15377"/>
        <dbReference type="ChEBI" id="CHEBI:15378"/>
        <dbReference type="ChEBI" id="CHEBI:37565"/>
        <dbReference type="ChEBI" id="CHEBI:43474"/>
        <dbReference type="ChEBI" id="CHEBI:58189"/>
        <dbReference type="EC" id="3.6.5.3"/>
    </reaction>
    <physiologicalReaction direction="left-to-right" evidence="2">
        <dbReference type="Rhea" id="RHEA:19670"/>
    </physiologicalReaction>
</comment>
<comment type="subunit">
    <text evidence="2">Monomer.</text>
</comment>
<comment type="subcellular location">
    <subcellularLocation>
        <location evidence="2">Cytoplasm</location>
    </subcellularLocation>
</comment>
<comment type="similarity">
    <text evidence="2">Belongs to the TRAFAC class translation factor GTPase superfamily. Classic translation factor GTPase family. EF-Tu/EF-1A subfamily.</text>
</comment>
<evidence type="ECO:0000250" key="1"/>
<evidence type="ECO:0000255" key="2">
    <source>
        <dbReference type="HAMAP-Rule" id="MF_00118"/>
    </source>
</evidence>
<name>EFTU_CHLAA</name>
<dbReference type="EC" id="3.6.5.3" evidence="2"/>
<dbReference type="EMBL" id="CP000909">
    <property type="protein sequence ID" value="ABY35393.1"/>
    <property type="molecule type" value="Genomic_DNA"/>
</dbReference>
<dbReference type="EMBL" id="CP000909">
    <property type="protein sequence ID" value="ABY35576.1"/>
    <property type="molecule type" value="Genomic_DNA"/>
</dbReference>
<dbReference type="RefSeq" id="WP_012258047.1">
    <property type="nucleotide sequence ID" value="NC_010175.1"/>
</dbReference>
<dbReference type="RefSeq" id="YP_001635782.1">
    <property type="nucleotide sequence ID" value="NC_010175.1"/>
</dbReference>
<dbReference type="RefSeq" id="YP_001635965.1">
    <property type="nucleotide sequence ID" value="NC_010175.1"/>
</dbReference>
<dbReference type="SMR" id="A9WFP3"/>
<dbReference type="FunCoup" id="A9WFP3">
    <property type="interactions" value="514"/>
</dbReference>
<dbReference type="STRING" id="324602.Caur_2182"/>
<dbReference type="EnsemblBacteria" id="ABY35393">
    <property type="protein sequence ID" value="ABY35393"/>
    <property type="gene ID" value="Caur_2182"/>
</dbReference>
<dbReference type="EnsemblBacteria" id="ABY35576">
    <property type="protein sequence ID" value="ABY35576"/>
    <property type="gene ID" value="Caur_2367"/>
</dbReference>
<dbReference type="KEGG" id="cau:Caur_2182"/>
<dbReference type="KEGG" id="cau:Caur_2367"/>
<dbReference type="PATRIC" id="fig|324602.8.peg.2469"/>
<dbReference type="eggNOG" id="COG0050">
    <property type="taxonomic scope" value="Bacteria"/>
</dbReference>
<dbReference type="HOGENOM" id="CLU_007265_0_1_0"/>
<dbReference type="InParanoid" id="A9WFP3"/>
<dbReference type="Proteomes" id="UP000002008">
    <property type="component" value="Chromosome"/>
</dbReference>
<dbReference type="GO" id="GO:0005737">
    <property type="term" value="C:cytoplasm"/>
    <property type="evidence" value="ECO:0007669"/>
    <property type="project" value="UniProtKB-SubCell"/>
</dbReference>
<dbReference type="GO" id="GO:0005525">
    <property type="term" value="F:GTP binding"/>
    <property type="evidence" value="ECO:0007669"/>
    <property type="project" value="UniProtKB-UniRule"/>
</dbReference>
<dbReference type="GO" id="GO:0003924">
    <property type="term" value="F:GTPase activity"/>
    <property type="evidence" value="ECO:0007669"/>
    <property type="project" value="InterPro"/>
</dbReference>
<dbReference type="GO" id="GO:0003746">
    <property type="term" value="F:translation elongation factor activity"/>
    <property type="evidence" value="ECO:0000318"/>
    <property type="project" value="GO_Central"/>
</dbReference>
<dbReference type="GO" id="GO:0006414">
    <property type="term" value="P:translational elongation"/>
    <property type="evidence" value="ECO:0000318"/>
    <property type="project" value="GO_Central"/>
</dbReference>
<dbReference type="CDD" id="cd01884">
    <property type="entry name" value="EF_Tu"/>
    <property type="match status" value="1"/>
</dbReference>
<dbReference type="CDD" id="cd03697">
    <property type="entry name" value="EFTU_II"/>
    <property type="match status" value="1"/>
</dbReference>
<dbReference type="CDD" id="cd03707">
    <property type="entry name" value="EFTU_III"/>
    <property type="match status" value="1"/>
</dbReference>
<dbReference type="FunFam" id="2.40.30.10:FF:000001">
    <property type="entry name" value="Elongation factor Tu"/>
    <property type="match status" value="1"/>
</dbReference>
<dbReference type="FunFam" id="3.40.50.300:FF:000003">
    <property type="entry name" value="Elongation factor Tu"/>
    <property type="match status" value="1"/>
</dbReference>
<dbReference type="Gene3D" id="3.40.50.300">
    <property type="entry name" value="P-loop containing nucleotide triphosphate hydrolases"/>
    <property type="match status" value="1"/>
</dbReference>
<dbReference type="Gene3D" id="2.40.30.10">
    <property type="entry name" value="Translation factors"/>
    <property type="match status" value="2"/>
</dbReference>
<dbReference type="HAMAP" id="MF_00118_B">
    <property type="entry name" value="EF_Tu_B"/>
    <property type="match status" value="1"/>
</dbReference>
<dbReference type="InterPro" id="IPR041709">
    <property type="entry name" value="EF-Tu_GTP-bd"/>
</dbReference>
<dbReference type="InterPro" id="IPR050055">
    <property type="entry name" value="EF-Tu_GTPase"/>
</dbReference>
<dbReference type="InterPro" id="IPR004161">
    <property type="entry name" value="EFTu-like_2"/>
</dbReference>
<dbReference type="InterPro" id="IPR033720">
    <property type="entry name" value="EFTU_2"/>
</dbReference>
<dbReference type="InterPro" id="IPR031157">
    <property type="entry name" value="G_TR_CS"/>
</dbReference>
<dbReference type="InterPro" id="IPR027417">
    <property type="entry name" value="P-loop_NTPase"/>
</dbReference>
<dbReference type="InterPro" id="IPR005225">
    <property type="entry name" value="Small_GTP-bd"/>
</dbReference>
<dbReference type="InterPro" id="IPR000795">
    <property type="entry name" value="T_Tr_GTP-bd_dom"/>
</dbReference>
<dbReference type="InterPro" id="IPR009000">
    <property type="entry name" value="Transl_B-barrel_sf"/>
</dbReference>
<dbReference type="InterPro" id="IPR009001">
    <property type="entry name" value="Transl_elong_EF1A/Init_IF2_C"/>
</dbReference>
<dbReference type="InterPro" id="IPR004541">
    <property type="entry name" value="Transl_elong_EFTu/EF1A_bac/org"/>
</dbReference>
<dbReference type="InterPro" id="IPR004160">
    <property type="entry name" value="Transl_elong_EFTu/EF1A_C"/>
</dbReference>
<dbReference type="NCBIfam" id="TIGR00485">
    <property type="entry name" value="EF-Tu"/>
    <property type="match status" value="1"/>
</dbReference>
<dbReference type="NCBIfam" id="NF000766">
    <property type="entry name" value="PRK00049.1"/>
    <property type="match status" value="1"/>
</dbReference>
<dbReference type="NCBIfam" id="NF009372">
    <property type="entry name" value="PRK12735.1"/>
    <property type="match status" value="1"/>
</dbReference>
<dbReference type="NCBIfam" id="NF009373">
    <property type="entry name" value="PRK12736.1"/>
    <property type="match status" value="1"/>
</dbReference>
<dbReference type="NCBIfam" id="TIGR00231">
    <property type="entry name" value="small_GTP"/>
    <property type="match status" value="1"/>
</dbReference>
<dbReference type="PANTHER" id="PTHR43721:SF22">
    <property type="entry name" value="ELONGATION FACTOR TU, MITOCHONDRIAL"/>
    <property type="match status" value="1"/>
</dbReference>
<dbReference type="PANTHER" id="PTHR43721">
    <property type="entry name" value="ELONGATION FACTOR TU-RELATED"/>
    <property type="match status" value="1"/>
</dbReference>
<dbReference type="Pfam" id="PF00009">
    <property type="entry name" value="GTP_EFTU"/>
    <property type="match status" value="1"/>
</dbReference>
<dbReference type="Pfam" id="PF03144">
    <property type="entry name" value="GTP_EFTU_D2"/>
    <property type="match status" value="1"/>
</dbReference>
<dbReference type="Pfam" id="PF03143">
    <property type="entry name" value="GTP_EFTU_D3"/>
    <property type="match status" value="1"/>
</dbReference>
<dbReference type="PRINTS" id="PR00315">
    <property type="entry name" value="ELONGATNFCT"/>
</dbReference>
<dbReference type="SUPFAM" id="SSF50465">
    <property type="entry name" value="EF-Tu/eEF-1alpha/eIF2-gamma C-terminal domain"/>
    <property type="match status" value="1"/>
</dbReference>
<dbReference type="SUPFAM" id="SSF52540">
    <property type="entry name" value="P-loop containing nucleoside triphosphate hydrolases"/>
    <property type="match status" value="1"/>
</dbReference>
<dbReference type="SUPFAM" id="SSF50447">
    <property type="entry name" value="Translation proteins"/>
    <property type="match status" value="1"/>
</dbReference>
<dbReference type="PROSITE" id="PS00301">
    <property type="entry name" value="G_TR_1"/>
    <property type="match status" value="1"/>
</dbReference>
<dbReference type="PROSITE" id="PS51722">
    <property type="entry name" value="G_TR_2"/>
    <property type="match status" value="1"/>
</dbReference>
<sequence>MAKQKFERTKPHINVGTIGHVDHGKTTLTAAITKVLSLKGAAQFMAYDQIDNAPEERARGITIAIRHVEYQTDKRHYAHVDCPGHADYIKNMITGAAQMDGAILVVSAPDGPMPQTREHILLARQVQVPAIVVFLNKVDMMDDPELLELVELELRELLSKYGFPGDEIPIVRGSARNALESPSKDINAPEYKCILELMNAVDEYIPTPQRAVDQPFLMPIEDVFGIKGRGTVVTGRIERGKVKVGDTVEIVGMTNDAPRRTVVTGVEMFQKTLDEGIAGDNVGCLLRGIERTDVERGQVLCAPGSIKPHKKFEAQVYVLKKEEGGRHTPFFSGYRPQFYIRTTDVTGAIGLPAGMEMVMPGDNVVMTIELIVPVAIEEGLRFAIREGGRTVGAGVVTKILD</sequence>
<keyword id="KW-0963">Cytoplasm</keyword>
<keyword id="KW-0251">Elongation factor</keyword>
<keyword id="KW-0342">GTP-binding</keyword>
<keyword id="KW-0378">Hydrolase</keyword>
<keyword id="KW-0460">Magnesium</keyword>
<keyword id="KW-0479">Metal-binding</keyword>
<keyword id="KW-0547">Nucleotide-binding</keyword>
<keyword id="KW-0648">Protein biosynthesis</keyword>
<keyword id="KW-1185">Reference proteome</keyword>
<proteinExistence type="inferred from homology"/>
<feature type="chain" id="PRO_0000337353" description="Elongation factor Tu">
    <location>
        <begin position="1"/>
        <end position="401"/>
    </location>
</feature>
<feature type="domain" description="tr-type G">
    <location>
        <begin position="10"/>
        <end position="209"/>
    </location>
</feature>
<feature type="region of interest" description="G1" evidence="1">
    <location>
        <begin position="19"/>
        <end position="26"/>
    </location>
</feature>
<feature type="region of interest" description="G2" evidence="1">
    <location>
        <begin position="60"/>
        <end position="64"/>
    </location>
</feature>
<feature type="region of interest" description="G3" evidence="1">
    <location>
        <begin position="81"/>
        <end position="84"/>
    </location>
</feature>
<feature type="region of interest" description="G4" evidence="1">
    <location>
        <begin position="136"/>
        <end position="139"/>
    </location>
</feature>
<feature type="region of interest" description="G5" evidence="1">
    <location>
        <begin position="174"/>
        <end position="176"/>
    </location>
</feature>
<feature type="binding site" evidence="2">
    <location>
        <begin position="19"/>
        <end position="26"/>
    </location>
    <ligand>
        <name>GTP</name>
        <dbReference type="ChEBI" id="CHEBI:37565"/>
    </ligand>
</feature>
<feature type="binding site" evidence="2">
    <location>
        <position position="26"/>
    </location>
    <ligand>
        <name>Mg(2+)</name>
        <dbReference type="ChEBI" id="CHEBI:18420"/>
    </ligand>
</feature>
<feature type="binding site" evidence="2">
    <location>
        <begin position="81"/>
        <end position="85"/>
    </location>
    <ligand>
        <name>GTP</name>
        <dbReference type="ChEBI" id="CHEBI:37565"/>
    </ligand>
</feature>
<feature type="binding site" evidence="2">
    <location>
        <begin position="136"/>
        <end position="139"/>
    </location>
    <ligand>
        <name>GTP</name>
        <dbReference type="ChEBI" id="CHEBI:37565"/>
    </ligand>
</feature>